<evidence type="ECO:0000255" key="1">
    <source>
        <dbReference type="HAMAP-Rule" id="MF_01307"/>
    </source>
</evidence>
<evidence type="ECO:0000256" key="2">
    <source>
        <dbReference type="SAM" id="MobiDB-lite"/>
    </source>
</evidence>
<evidence type="ECO:0000305" key="3"/>
<accession>C1AL55</accession>
<reference key="1">
    <citation type="journal article" date="2009" name="Vaccine">
        <title>Whole genome sequence analysis of Mycobacterium bovis bacillus Calmette-Guerin (BCG) Tokyo 172: a comparative study of BCG vaccine substrains.</title>
        <authorList>
            <person name="Seki M."/>
            <person name="Honda I."/>
            <person name="Fujita I."/>
            <person name="Yano I."/>
            <person name="Yamamoto S."/>
            <person name="Koyama A."/>
        </authorList>
    </citation>
    <scope>NUCLEOTIDE SEQUENCE [LARGE SCALE GENOMIC DNA]</scope>
    <source>
        <strain>BCG / Tokyo 172 / ATCC 35737 / TMC 1019</strain>
    </source>
</reference>
<feature type="chain" id="PRO_1000165457" description="Small ribosomal subunit protein uS5">
    <location>
        <begin position="1"/>
        <end position="220"/>
    </location>
</feature>
<feature type="domain" description="S5 DRBM" evidence="1">
    <location>
        <begin position="42"/>
        <end position="105"/>
    </location>
</feature>
<feature type="region of interest" description="Disordered" evidence="2">
    <location>
        <begin position="1"/>
        <end position="39"/>
    </location>
</feature>
<feature type="compositionally biased region" description="Basic and acidic residues" evidence="2">
    <location>
        <begin position="13"/>
        <end position="39"/>
    </location>
</feature>
<name>RS5_MYCBT</name>
<keyword id="KW-0687">Ribonucleoprotein</keyword>
<keyword id="KW-0689">Ribosomal protein</keyword>
<keyword id="KW-0694">RNA-binding</keyword>
<keyword id="KW-0699">rRNA-binding</keyword>
<proteinExistence type="inferred from homology"/>
<sequence length="220" mass="22888">MAEQPAGQAGTTDNRDARGDREGRRRDSGRGSRERDGEKSNYLERVVAINRVSKVVKGGRRFSFTALVIVGDGNGMVGVGYGKAKEVPAAIAKGVEEARKSFFRVPLIGGTITHPVQGEAAAGVVLLRPASPGTGVIAGGAARAVLECAGVHDILAKSLGSDNAINVVHATVAALKLLQRPEEVAARRGLPIEDVAPAGMLKARRKSEALAASVLPDRTI</sequence>
<protein>
    <recommendedName>
        <fullName evidence="1">Small ribosomal subunit protein uS5</fullName>
    </recommendedName>
    <alternativeName>
        <fullName evidence="3">30S ribosomal protein S5</fullName>
    </alternativeName>
</protein>
<dbReference type="EMBL" id="AP010918">
    <property type="protein sequence ID" value="BAH25034.1"/>
    <property type="molecule type" value="Genomic_DNA"/>
</dbReference>
<dbReference type="RefSeq" id="WP_003403680.1">
    <property type="nucleotide sequence ID" value="NZ_CP014566.1"/>
</dbReference>
<dbReference type="SMR" id="C1AL55"/>
<dbReference type="GeneID" id="45424686"/>
<dbReference type="KEGG" id="mbt:JTY_0741"/>
<dbReference type="HOGENOM" id="CLU_065898_1_1_11"/>
<dbReference type="GO" id="GO:0015935">
    <property type="term" value="C:small ribosomal subunit"/>
    <property type="evidence" value="ECO:0007669"/>
    <property type="project" value="InterPro"/>
</dbReference>
<dbReference type="GO" id="GO:0019843">
    <property type="term" value="F:rRNA binding"/>
    <property type="evidence" value="ECO:0007669"/>
    <property type="project" value="UniProtKB-UniRule"/>
</dbReference>
<dbReference type="GO" id="GO:0003735">
    <property type="term" value="F:structural constituent of ribosome"/>
    <property type="evidence" value="ECO:0007669"/>
    <property type="project" value="InterPro"/>
</dbReference>
<dbReference type="GO" id="GO:0006412">
    <property type="term" value="P:translation"/>
    <property type="evidence" value="ECO:0007669"/>
    <property type="project" value="UniProtKB-UniRule"/>
</dbReference>
<dbReference type="FunFam" id="3.30.160.20:FF:000001">
    <property type="entry name" value="30S ribosomal protein S5"/>
    <property type="match status" value="1"/>
</dbReference>
<dbReference type="FunFam" id="3.30.230.10:FF:000002">
    <property type="entry name" value="30S ribosomal protein S5"/>
    <property type="match status" value="1"/>
</dbReference>
<dbReference type="Gene3D" id="3.30.160.20">
    <property type="match status" value="1"/>
</dbReference>
<dbReference type="Gene3D" id="3.30.230.10">
    <property type="match status" value="1"/>
</dbReference>
<dbReference type="HAMAP" id="MF_01307_B">
    <property type="entry name" value="Ribosomal_uS5_B"/>
    <property type="match status" value="1"/>
</dbReference>
<dbReference type="InterPro" id="IPR020568">
    <property type="entry name" value="Ribosomal_Su5_D2-typ_SF"/>
</dbReference>
<dbReference type="InterPro" id="IPR000851">
    <property type="entry name" value="Ribosomal_uS5"/>
</dbReference>
<dbReference type="InterPro" id="IPR005712">
    <property type="entry name" value="Ribosomal_uS5_bac-type"/>
</dbReference>
<dbReference type="InterPro" id="IPR005324">
    <property type="entry name" value="Ribosomal_uS5_C"/>
</dbReference>
<dbReference type="InterPro" id="IPR013810">
    <property type="entry name" value="Ribosomal_uS5_N"/>
</dbReference>
<dbReference type="InterPro" id="IPR018192">
    <property type="entry name" value="Ribosomal_uS5_N_CS"/>
</dbReference>
<dbReference type="InterPro" id="IPR014721">
    <property type="entry name" value="Ribsml_uS5_D2-typ_fold_subgr"/>
</dbReference>
<dbReference type="NCBIfam" id="TIGR01021">
    <property type="entry name" value="rpsE_bact"/>
    <property type="match status" value="1"/>
</dbReference>
<dbReference type="PANTHER" id="PTHR48277">
    <property type="entry name" value="MITOCHONDRIAL RIBOSOMAL PROTEIN S5"/>
    <property type="match status" value="1"/>
</dbReference>
<dbReference type="PANTHER" id="PTHR48277:SF1">
    <property type="entry name" value="MITOCHONDRIAL RIBOSOMAL PROTEIN S5"/>
    <property type="match status" value="1"/>
</dbReference>
<dbReference type="Pfam" id="PF00333">
    <property type="entry name" value="Ribosomal_S5"/>
    <property type="match status" value="1"/>
</dbReference>
<dbReference type="Pfam" id="PF03719">
    <property type="entry name" value="Ribosomal_S5_C"/>
    <property type="match status" value="1"/>
</dbReference>
<dbReference type="SUPFAM" id="SSF54768">
    <property type="entry name" value="dsRNA-binding domain-like"/>
    <property type="match status" value="1"/>
</dbReference>
<dbReference type="SUPFAM" id="SSF54211">
    <property type="entry name" value="Ribosomal protein S5 domain 2-like"/>
    <property type="match status" value="1"/>
</dbReference>
<dbReference type="PROSITE" id="PS00585">
    <property type="entry name" value="RIBOSOMAL_S5"/>
    <property type="match status" value="1"/>
</dbReference>
<dbReference type="PROSITE" id="PS50881">
    <property type="entry name" value="S5_DSRBD"/>
    <property type="match status" value="1"/>
</dbReference>
<gene>
    <name evidence="1" type="primary">rpsE</name>
    <name type="ordered locus">JTY_0741</name>
</gene>
<organism>
    <name type="scientific">Mycobacterium bovis (strain BCG / Tokyo 172 / ATCC 35737 / TMC 1019)</name>
    <dbReference type="NCBI Taxonomy" id="561275"/>
    <lineage>
        <taxon>Bacteria</taxon>
        <taxon>Bacillati</taxon>
        <taxon>Actinomycetota</taxon>
        <taxon>Actinomycetes</taxon>
        <taxon>Mycobacteriales</taxon>
        <taxon>Mycobacteriaceae</taxon>
        <taxon>Mycobacterium</taxon>
        <taxon>Mycobacterium tuberculosis complex</taxon>
    </lineage>
</organism>
<comment type="function">
    <text evidence="1">With S4 and S12 plays an important role in translational accuracy.</text>
</comment>
<comment type="function">
    <text evidence="1">Located at the back of the 30S subunit body where it stabilizes the conformation of the head with respect to the body.</text>
</comment>
<comment type="subunit">
    <text evidence="1">Part of the 30S ribosomal subunit. Contacts proteins S4 and S8.</text>
</comment>
<comment type="domain">
    <text>The N-terminal domain interacts with the head of the 30S subunit; the C-terminal domain interacts with the body and contacts protein S4. The interaction surface between S4 and S5 is involved in control of translational fidelity.</text>
</comment>
<comment type="similarity">
    <text evidence="1">Belongs to the universal ribosomal protein uS5 family.</text>
</comment>